<organism>
    <name type="scientific">Staphylothermus marinus (strain ATCC 43588 / DSM 3639 / JCM 9404 / F1)</name>
    <dbReference type="NCBI Taxonomy" id="399550"/>
    <lineage>
        <taxon>Archaea</taxon>
        <taxon>Thermoproteota</taxon>
        <taxon>Thermoprotei</taxon>
        <taxon>Desulfurococcales</taxon>
        <taxon>Desulfurococcaceae</taxon>
        <taxon>Staphylothermus</taxon>
    </lineage>
</organism>
<keyword id="KW-0489">Methyltransferase</keyword>
<keyword id="KW-1185">Reference proteome</keyword>
<keyword id="KW-0690">Ribosome biogenesis</keyword>
<keyword id="KW-0694">RNA-binding</keyword>
<keyword id="KW-0698">rRNA processing</keyword>
<keyword id="KW-0699">rRNA-binding</keyword>
<keyword id="KW-0949">S-adenosyl-L-methionine</keyword>
<keyword id="KW-0808">Transferase</keyword>
<evidence type="ECO:0000255" key="1">
    <source>
        <dbReference type="HAMAP-Rule" id="MF_00554"/>
    </source>
</evidence>
<evidence type="ECO:0000305" key="2"/>
<name>NEP1_STAMF</name>
<comment type="function">
    <text evidence="1">Methyltransferase involved in ribosomal biogenesis. Specifically catalyzes the N1-methylation of the pseudouridine corresponding to position 914 in M.jannaschii 16S rRNA.</text>
</comment>
<comment type="catalytic activity">
    <reaction evidence="1">
        <text>a pseudouridine in rRNA + S-adenosyl-L-methionine = an N(1)-methylpseudouridine in rRNA + S-adenosyl-L-homocysteine + H(+)</text>
        <dbReference type="Rhea" id="RHEA:46696"/>
        <dbReference type="Rhea" id="RHEA-COMP:11634"/>
        <dbReference type="Rhea" id="RHEA-COMP:13933"/>
        <dbReference type="ChEBI" id="CHEBI:15378"/>
        <dbReference type="ChEBI" id="CHEBI:57856"/>
        <dbReference type="ChEBI" id="CHEBI:59789"/>
        <dbReference type="ChEBI" id="CHEBI:65314"/>
        <dbReference type="ChEBI" id="CHEBI:74890"/>
    </reaction>
</comment>
<comment type="subunit">
    <text evidence="1">Homodimer.</text>
</comment>
<comment type="similarity">
    <text evidence="2">Belongs to the class IV-like SAM-binding methyltransferase superfamily. RNA methyltransferase NEP1 family.</text>
</comment>
<feature type="chain" id="PRO_1000017931" description="Ribosomal RNA small subunit methyltransferase Nep1">
    <location>
        <begin position="1"/>
        <end position="230"/>
    </location>
</feature>
<feature type="binding site" evidence="1">
    <location>
        <position position="184"/>
    </location>
    <ligand>
        <name>S-adenosyl-L-methionine</name>
        <dbReference type="ChEBI" id="CHEBI:59789"/>
    </ligand>
</feature>
<feature type="binding site" evidence="1">
    <location>
        <position position="189"/>
    </location>
    <ligand>
        <name>S-adenosyl-L-methionine</name>
        <dbReference type="ChEBI" id="CHEBI:59789"/>
    </ligand>
</feature>
<feature type="binding site" evidence="1">
    <location>
        <begin position="205"/>
        <end position="210"/>
    </location>
    <ligand>
        <name>S-adenosyl-L-methionine</name>
        <dbReference type="ChEBI" id="CHEBI:59789"/>
    </ligand>
</feature>
<feature type="site" description="Interaction with substrate rRNA" evidence="1">
    <location>
        <position position="65"/>
    </location>
</feature>
<feature type="site" description="Stabilizes Arg-65" evidence="1">
    <location>
        <position position="67"/>
    </location>
</feature>
<feature type="site" description="Interaction with substrate rRNA" evidence="1">
    <location>
        <position position="106"/>
    </location>
</feature>
<feature type="site" description="Interaction with substrate rRNA" evidence="1">
    <location>
        <position position="109"/>
    </location>
</feature>
<feature type="site" description="Interaction with substrate rRNA" evidence="1">
    <location>
        <position position="113"/>
    </location>
</feature>
<proteinExistence type="inferred from homology"/>
<dbReference type="EC" id="2.1.1.-" evidence="1"/>
<dbReference type="EMBL" id="CP000575">
    <property type="protein sequence ID" value="ABN70179.1"/>
    <property type="molecule type" value="Genomic_DNA"/>
</dbReference>
<dbReference type="RefSeq" id="WP_011839370.1">
    <property type="nucleotide sequence ID" value="NC_009033.1"/>
</dbReference>
<dbReference type="SMR" id="A3DNG9"/>
<dbReference type="STRING" id="399550.Smar_1081"/>
<dbReference type="GeneID" id="4906949"/>
<dbReference type="KEGG" id="smr:Smar_1081"/>
<dbReference type="eggNOG" id="arCOG04122">
    <property type="taxonomic scope" value="Archaea"/>
</dbReference>
<dbReference type="HOGENOM" id="CLU_055846_1_3_2"/>
<dbReference type="OrthoDB" id="7612at2157"/>
<dbReference type="Proteomes" id="UP000000254">
    <property type="component" value="Chromosome"/>
</dbReference>
<dbReference type="GO" id="GO:0070037">
    <property type="term" value="F:rRNA (pseudouridine) methyltransferase activity"/>
    <property type="evidence" value="ECO:0007669"/>
    <property type="project" value="UniProtKB-UniRule"/>
</dbReference>
<dbReference type="GO" id="GO:0019843">
    <property type="term" value="F:rRNA binding"/>
    <property type="evidence" value="ECO:0007669"/>
    <property type="project" value="UniProtKB-UniRule"/>
</dbReference>
<dbReference type="GO" id="GO:0070475">
    <property type="term" value="P:rRNA base methylation"/>
    <property type="evidence" value="ECO:0007669"/>
    <property type="project" value="InterPro"/>
</dbReference>
<dbReference type="CDD" id="cd18088">
    <property type="entry name" value="Nep1-like"/>
    <property type="match status" value="1"/>
</dbReference>
<dbReference type="FunFam" id="3.40.1280.10:FF:000042">
    <property type="entry name" value="Ribosomal RNA small subunit methyltransferase Nep1"/>
    <property type="match status" value="1"/>
</dbReference>
<dbReference type="Gene3D" id="3.40.1280.10">
    <property type="match status" value="1"/>
</dbReference>
<dbReference type="HAMAP" id="MF_00554">
    <property type="entry name" value="NEP1"/>
    <property type="match status" value="1"/>
</dbReference>
<dbReference type="InterPro" id="IPR029028">
    <property type="entry name" value="Alpha/beta_knot_MTases"/>
</dbReference>
<dbReference type="InterPro" id="IPR005304">
    <property type="entry name" value="Rbsml_bgen_MeTrfase_EMG1/NEP1"/>
</dbReference>
<dbReference type="InterPro" id="IPR023503">
    <property type="entry name" value="Ribosome_NEP1_arc"/>
</dbReference>
<dbReference type="InterPro" id="IPR029026">
    <property type="entry name" value="tRNA_m1G_MTases_N"/>
</dbReference>
<dbReference type="NCBIfam" id="NF003206">
    <property type="entry name" value="PRK04171.2-1"/>
    <property type="match status" value="1"/>
</dbReference>
<dbReference type="NCBIfam" id="NF003207">
    <property type="entry name" value="PRK04171.2-2"/>
    <property type="match status" value="1"/>
</dbReference>
<dbReference type="PANTHER" id="PTHR12636">
    <property type="entry name" value="NEP1/MRA1"/>
    <property type="match status" value="1"/>
</dbReference>
<dbReference type="PANTHER" id="PTHR12636:SF5">
    <property type="entry name" value="RIBOSOMAL RNA SMALL SUBUNIT METHYLTRANSFERASE NEP1"/>
    <property type="match status" value="1"/>
</dbReference>
<dbReference type="Pfam" id="PF03587">
    <property type="entry name" value="EMG1"/>
    <property type="match status" value="1"/>
</dbReference>
<dbReference type="SUPFAM" id="SSF75217">
    <property type="entry name" value="alpha/beta knot"/>
    <property type="match status" value="1"/>
</dbReference>
<protein>
    <recommendedName>
        <fullName evidence="1">Ribosomal RNA small subunit methyltransferase Nep1</fullName>
        <ecNumber evidence="1">2.1.1.-</ecNumber>
    </recommendedName>
    <alternativeName>
        <fullName evidence="1">16S rRNA (pseudouridine-N1-)-methyltransferase Nep1</fullName>
    </alternativeName>
</protein>
<accession>A3DNG9</accession>
<sequence>MNMKEPISIILLESALELVPKELWKHPAVVKNARRRGKKPGETLLDVSLHYHAMKKLKDKEKRGRPDIVHISLLNALESPLNKEGYLRIYIHTYPGHIIFVKPETRIPRNYNRFVGLMEQLLIHGKVPPDSDDPLLYVKTMTISDLLEKINKNGIILLREHGEKEKPENIVKYAVENNYAIGIGGFPHGDYSQEIISISKAEFSIYNKPLTTWITISRVIVGAEHLYNII</sequence>
<gene>
    <name evidence="1" type="primary">nep1</name>
    <name type="ordered locus">Smar_1081</name>
</gene>
<reference key="1">
    <citation type="journal article" date="2009" name="BMC Genomics">
        <title>The complete genome sequence of Staphylothermus marinus reveals differences in sulfur metabolism among heterotrophic Crenarchaeota.</title>
        <authorList>
            <person name="Anderson I.J."/>
            <person name="Dharmarajan L."/>
            <person name="Rodriguez J."/>
            <person name="Hooper S."/>
            <person name="Porat I."/>
            <person name="Ulrich L.E."/>
            <person name="Elkins J.G."/>
            <person name="Mavromatis K."/>
            <person name="Sun H."/>
            <person name="Land M."/>
            <person name="Lapidus A."/>
            <person name="Lucas S."/>
            <person name="Barry K."/>
            <person name="Huber H."/>
            <person name="Zhulin I.B."/>
            <person name="Whitman W.B."/>
            <person name="Mukhopadhyay B."/>
            <person name="Woese C."/>
            <person name="Bristow J."/>
            <person name="Kyrpides N."/>
        </authorList>
    </citation>
    <scope>NUCLEOTIDE SEQUENCE [LARGE SCALE GENOMIC DNA]</scope>
    <source>
        <strain>ATCC 43588 / DSM 3639 / JCM 9404 / F1</strain>
    </source>
</reference>
<reference key="2">
    <citation type="journal article" date="2009" name="Stand. Genomic Sci.">
        <title>Complete genome sequence of Staphylothermus marinus Stetter and Fiala 1986 type strain F1.</title>
        <authorList>
            <person name="Anderson I.J."/>
            <person name="Sun H."/>
            <person name="Lapidus A."/>
            <person name="Copeland A."/>
            <person name="Glavina Del Rio T."/>
            <person name="Tice H."/>
            <person name="Dalin E."/>
            <person name="Lucas S."/>
            <person name="Barry K."/>
            <person name="Land M."/>
            <person name="Richardson P."/>
            <person name="Huber H."/>
            <person name="Kyrpides N.C."/>
        </authorList>
    </citation>
    <scope>NUCLEOTIDE SEQUENCE [LARGE SCALE GENOMIC DNA]</scope>
    <source>
        <strain>ATCC 43588 / DSM 3639 / JCM 9404 / F1</strain>
    </source>
</reference>